<keyword id="KW-0378">Hydrolase</keyword>
<keyword id="KW-0460">Magnesium</keyword>
<keyword id="KW-0479">Metal-binding</keyword>
<keyword id="KW-0546">Nucleotide metabolism</keyword>
<protein>
    <recommendedName>
        <fullName evidence="1">Deoxyuridine 5'-triphosphate nucleotidohydrolase</fullName>
        <shortName evidence="1">dUTPase</shortName>
        <ecNumber evidence="1">3.6.1.23</ecNumber>
    </recommendedName>
    <alternativeName>
        <fullName evidence="1">dUTP pyrophosphatase</fullName>
    </alternativeName>
</protein>
<accession>B1JXC6</accession>
<proteinExistence type="inferred from homology"/>
<organism>
    <name type="scientific">Burkholderia orbicola (strain MC0-3)</name>
    <dbReference type="NCBI Taxonomy" id="406425"/>
    <lineage>
        <taxon>Bacteria</taxon>
        <taxon>Pseudomonadati</taxon>
        <taxon>Pseudomonadota</taxon>
        <taxon>Betaproteobacteria</taxon>
        <taxon>Burkholderiales</taxon>
        <taxon>Burkholderiaceae</taxon>
        <taxon>Burkholderia</taxon>
        <taxon>Burkholderia cepacia complex</taxon>
        <taxon>Burkholderia orbicola</taxon>
    </lineage>
</organism>
<gene>
    <name evidence="1" type="primary">dut</name>
    <name type="ordered locus">Bcenmc03_2540</name>
</gene>
<comment type="function">
    <text evidence="1">This enzyme is involved in nucleotide metabolism: it produces dUMP, the immediate precursor of thymidine nucleotides and it decreases the intracellular concentration of dUTP so that uracil cannot be incorporated into DNA.</text>
</comment>
<comment type="catalytic activity">
    <reaction evidence="1">
        <text>dUTP + H2O = dUMP + diphosphate + H(+)</text>
        <dbReference type="Rhea" id="RHEA:10248"/>
        <dbReference type="ChEBI" id="CHEBI:15377"/>
        <dbReference type="ChEBI" id="CHEBI:15378"/>
        <dbReference type="ChEBI" id="CHEBI:33019"/>
        <dbReference type="ChEBI" id="CHEBI:61555"/>
        <dbReference type="ChEBI" id="CHEBI:246422"/>
        <dbReference type="EC" id="3.6.1.23"/>
    </reaction>
</comment>
<comment type="cofactor">
    <cofactor evidence="1">
        <name>Mg(2+)</name>
        <dbReference type="ChEBI" id="CHEBI:18420"/>
    </cofactor>
</comment>
<comment type="pathway">
    <text evidence="1">Pyrimidine metabolism; dUMP biosynthesis; dUMP from dCTP (dUTP route): step 2/2.</text>
</comment>
<comment type="similarity">
    <text evidence="1">Belongs to the dUTPase family.</text>
</comment>
<evidence type="ECO:0000255" key="1">
    <source>
        <dbReference type="HAMAP-Rule" id="MF_00116"/>
    </source>
</evidence>
<name>DUT_BURO0</name>
<reference key="1">
    <citation type="submission" date="2008-02" db="EMBL/GenBank/DDBJ databases">
        <title>Complete sequence of chromosome 1 of Burkholderia cenocepacia MC0-3.</title>
        <authorList>
            <person name="Copeland A."/>
            <person name="Lucas S."/>
            <person name="Lapidus A."/>
            <person name="Barry K."/>
            <person name="Bruce D."/>
            <person name="Goodwin L."/>
            <person name="Glavina del Rio T."/>
            <person name="Dalin E."/>
            <person name="Tice H."/>
            <person name="Pitluck S."/>
            <person name="Chain P."/>
            <person name="Malfatti S."/>
            <person name="Shin M."/>
            <person name="Vergez L."/>
            <person name="Schmutz J."/>
            <person name="Larimer F."/>
            <person name="Land M."/>
            <person name="Hauser L."/>
            <person name="Kyrpides N."/>
            <person name="Mikhailova N."/>
            <person name="Tiedje J."/>
            <person name="Richardson P."/>
        </authorList>
    </citation>
    <scope>NUCLEOTIDE SEQUENCE [LARGE SCALE GENOMIC DNA]</scope>
    <source>
        <strain>MC0-3</strain>
    </source>
</reference>
<sequence length="148" mass="15885">MKLDLKILDARMRDYLPAYATTGSAGLDLRACLDAPVTLQPGETTLVPTGLAIHLADPGYAALILPRSGLGHKHGIVLGNLVGLIDSDYQGQLMVSTWNRGQTAFVLNPFERLAQLVIVPVVQAQFNIVDEFTESDRGEGGFGSTGRH</sequence>
<feature type="chain" id="PRO_1000094945" description="Deoxyuridine 5'-triphosphate nucleotidohydrolase">
    <location>
        <begin position="1"/>
        <end position="148"/>
    </location>
</feature>
<feature type="binding site" evidence="1">
    <location>
        <begin position="67"/>
        <end position="69"/>
    </location>
    <ligand>
        <name>substrate</name>
    </ligand>
</feature>
<feature type="binding site" evidence="1">
    <location>
        <position position="80"/>
    </location>
    <ligand>
        <name>substrate</name>
    </ligand>
</feature>
<feature type="binding site" evidence="1">
    <location>
        <begin position="84"/>
        <end position="86"/>
    </location>
    <ligand>
        <name>substrate</name>
    </ligand>
</feature>
<feature type="binding site" evidence="1">
    <location>
        <position position="94"/>
    </location>
    <ligand>
        <name>substrate</name>
    </ligand>
</feature>
<dbReference type="EC" id="3.6.1.23" evidence="1"/>
<dbReference type="EMBL" id="CP000958">
    <property type="protein sequence ID" value="ACA91701.1"/>
    <property type="molecule type" value="Genomic_DNA"/>
</dbReference>
<dbReference type="RefSeq" id="WP_011546016.1">
    <property type="nucleotide sequence ID" value="NC_010508.1"/>
</dbReference>
<dbReference type="SMR" id="B1JXC6"/>
<dbReference type="GeneID" id="83049329"/>
<dbReference type="KEGG" id="bcm:Bcenmc03_2540"/>
<dbReference type="HOGENOM" id="CLU_068508_1_1_4"/>
<dbReference type="UniPathway" id="UPA00610">
    <property type="reaction ID" value="UER00666"/>
</dbReference>
<dbReference type="Proteomes" id="UP000002169">
    <property type="component" value="Chromosome 1"/>
</dbReference>
<dbReference type="GO" id="GO:0004170">
    <property type="term" value="F:dUTP diphosphatase activity"/>
    <property type="evidence" value="ECO:0007669"/>
    <property type="project" value="UniProtKB-UniRule"/>
</dbReference>
<dbReference type="GO" id="GO:0000287">
    <property type="term" value="F:magnesium ion binding"/>
    <property type="evidence" value="ECO:0007669"/>
    <property type="project" value="UniProtKB-UniRule"/>
</dbReference>
<dbReference type="GO" id="GO:0006226">
    <property type="term" value="P:dUMP biosynthetic process"/>
    <property type="evidence" value="ECO:0007669"/>
    <property type="project" value="UniProtKB-UniRule"/>
</dbReference>
<dbReference type="GO" id="GO:0046081">
    <property type="term" value="P:dUTP catabolic process"/>
    <property type="evidence" value="ECO:0007669"/>
    <property type="project" value="InterPro"/>
</dbReference>
<dbReference type="CDD" id="cd07557">
    <property type="entry name" value="trimeric_dUTPase"/>
    <property type="match status" value="1"/>
</dbReference>
<dbReference type="FunFam" id="2.70.40.10:FF:000002">
    <property type="entry name" value="dUTP diphosphatase"/>
    <property type="match status" value="1"/>
</dbReference>
<dbReference type="Gene3D" id="2.70.40.10">
    <property type="match status" value="1"/>
</dbReference>
<dbReference type="HAMAP" id="MF_00116">
    <property type="entry name" value="dUTPase_bact"/>
    <property type="match status" value="1"/>
</dbReference>
<dbReference type="InterPro" id="IPR008181">
    <property type="entry name" value="dUTPase"/>
</dbReference>
<dbReference type="InterPro" id="IPR029054">
    <property type="entry name" value="dUTPase-like"/>
</dbReference>
<dbReference type="InterPro" id="IPR036157">
    <property type="entry name" value="dUTPase-like_sf"/>
</dbReference>
<dbReference type="InterPro" id="IPR033704">
    <property type="entry name" value="dUTPase_trimeric"/>
</dbReference>
<dbReference type="NCBIfam" id="TIGR00576">
    <property type="entry name" value="dut"/>
    <property type="match status" value="1"/>
</dbReference>
<dbReference type="NCBIfam" id="NF001862">
    <property type="entry name" value="PRK00601.1"/>
    <property type="match status" value="1"/>
</dbReference>
<dbReference type="PANTHER" id="PTHR11241">
    <property type="entry name" value="DEOXYURIDINE 5'-TRIPHOSPHATE NUCLEOTIDOHYDROLASE"/>
    <property type="match status" value="1"/>
</dbReference>
<dbReference type="PANTHER" id="PTHR11241:SF0">
    <property type="entry name" value="DEOXYURIDINE 5'-TRIPHOSPHATE NUCLEOTIDOHYDROLASE"/>
    <property type="match status" value="1"/>
</dbReference>
<dbReference type="Pfam" id="PF00692">
    <property type="entry name" value="dUTPase"/>
    <property type="match status" value="1"/>
</dbReference>
<dbReference type="SUPFAM" id="SSF51283">
    <property type="entry name" value="dUTPase-like"/>
    <property type="match status" value="1"/>
</dbReference>